<comment type="function">
    <text evidence="1">Catalyzes the anti-1,4-elimination of the C-3 phosphate and the C-6 proR hydrogen from 5-enolpyruvylshikimate-3-phosphate (EPSP) to yield chorismate, which is the branch point compound that serves as the starting substrate for the three terminal pathways of aromatic amino acid biosynthesis. This reaction introduces a second double bond into the aromatic ring system.</text>
</comment>
<comment type="catalytic activity">
    <reaction evidence="1">
        <text>5-O-(1-carboxyvinyl)-3-phosphoshikimate = chorismate + phosphate</text>
        <dbReference type="Rhea" id="RHEA:21020"/>
        <dbReference type="ChEBI" id="CHEBI:29748"/>
        <dbReference type="ChEBI" id="CHEBI:43474"/>
        <dbReference type="ChEBI" id="CHEBI:57701"/>
        <dbReference type="EC" id="4.2.3.5"/>
    </reaction>
</comment>
<comment type="cofactor">
    <cofactor evidence="1">
        <name>FMNH2</name>
        <dbReference type="ChEBI" id="CHEBI:57618"/>
    </cofactor>
    <text evidence="1">Reduced FMN (FMNH(2)).</text>
</comment>
<comment type="pathway">
    <text evidence="1">Metabolic intermediate biosynthesis; chorismate biosynthesis; chorismate from D-erythrose 4-phosphate and phosphoenolpyruvate: step 7/7.</text>
</comment>
<comment type="subunit">
    <text evidence="1">Homotetramer.</text>
</comment>
<comment type="similarity">
    <text evidence="1">Belongs to the chorismate synthase family.</text>
</comment>
<keyword id="KW-0028">Amino-acid biosynthesis</keyword>
<keyword id="KW-0057">Aromatic amino acid biosynthesis</keyword>
<keyword id="KW-0274">FAD</keyword>
<keyword id="KW-0285">Flavoprotein</keyword>
<keyword id="KW-0288">FMN</keyword>
<keyword id="KW-0456">Lyase</keyword>
<keyword id="KW-0521">NADP</keyword>
<keyword id="KW-1185">Reference proteome</keyword>
<reference key="1">
    <citation type="submission" date="2006-02" db="EMBL/GenBank/DDBJ databases">
        <title>Complete sequence of chromosome of Rhodoferax ferrireducens DSM 15236.</title>
        <authorList>
            <person name="Copeland A."/>
            <person name="Lucas S."/>
            <person name="Lapidus A."/>
            <person name="Barry K."/>
            <person name="Detter J.C."/>
            <person name="Glavina del Rio T."/>
            <person name="Hammon N."/>
            <person name="Israni S."/>
            <person name="Pitluck S."/>
            <person name="Brettin T."/>
            <person name="Bruce D."/>
            <person name="Han C."/>
            <person name="Tapia R."/>
            <person name="Gilna P."/>
            <person name="Kiss H."/>
            <person name="Schmutz J."/>
            <person name="Larimer F."/>
            <person name="Land M."/>
            <person name="Kyrpides N."/>
            <person name="Ivanova N."/>
            <person name="Richardson P."/>
        </authorList>
    </citation>
    <scope>NUCLEOTIDE SEQUENCE [LARGE SCALE GENOMIC DNA]</scope>
    <source>
        <strain>ATCC BAA-621 / DSM 15236 / T118</strain>
    </source>
</reference>
<organism>
    <name type="scientific">Albidiferax ferrireducens (strain ATCC BAA-621 / DSM 15236 / T118)</name>
    <name type="common">Rhodoferax ferrireducens</name>
    <dbReference type="NCBI Taxonomy" id="338969"/>
    <lineage>
        <taxon>Bacteria</taxon>
        <taxon>Pseudomonadati</taxon>
        <taxon>Pseudomonadota</taxon>
        <taxon>Betaproteobacteria</taxon>
        <taxon>Burkholderiales</taxon>
        <taxon>Comamonadaceae</taxon>
        <taxon>Rhodoferax</taxon>
    </lineage>
</organism>
<name>AROC_ALBFT</name>
<evidence type="ECO:0000255" key="1">
    <source>
        <dbReference type="HAMAP-Rule" id="MF_00300"/>
    </source>
</evidence>
<gene>
    <name evidence="1" type="primary">aroC</name>
    <name type="ordered locus">Rfer_3161</name>
</gene>
<protein>
    <recommendedName>
        <fullName evidence="1">Chorismate synthase</fullName>
        <shortName evidence="1">CS</shortName>
        <ecNumber evidence="1">4.2.3.5</ecNumber>
    </recommendedName>
    <alternativeName>
        <fullName evidence="1">5-enolpyruvylshikimate-3-phosphate phospholyase</fullName>
    </alternativeName>
</protein>
<feature type="chain" id="PRO_0000256324" description="Chorismate synthase">
    <location>
        <begin position="1"/>
        <end position="364"/>
    </location>
</feature>
<feature type="binding site" evidence="1">
    <location>
        <position position="48"/>
    </location>
    <ligand>
        <name>NADP(+)</name>
        <dbReference type="ChEBI" id="CHEBI:58349"/>
    </ligand>
</feature>
<feature type="binding site" evidence="1">
    <location>
        <begin position="125"/>
        <end position="127"/>
    </location>
    <ligand>
        <name>FMN</name>
        <dbReference type="ChEBI" id="CHEBI:58210"/>
    </ligand>
</feature>
<feature type="binding site" evidence="1">
    <location>
        <begin position="237"/>
        <end position="238"/>
    </location>
    <ligand>
        <name>FMN</name>
        <dbReference type="ChEBI" id="CHEBI:58210"/>
    </ligand>
</feature>
<feature type="binding site" evidence="1">
    <location>
        <position position="277"/>
    </location>
    <ligand>
        <name>FMN</name>
        <dbReference type="ChEBI" id="CHEBI:58210"/>
    </ligand>
</feature>
<feature type="binding site" evidence="1">
    <location>
        <begin position="292"/>
        <end position="296"/>
    </location>
    <ligand>
        <name>FMN</name>
        <dbReference type="ChEBI" id="CHEBI:58210"/>
    </ligand>
</feature>
<feature type="binding site" evidence="1">
    <location>
        <position position="318"/>
    </location>
    <ligand>
        <name>FMN</name>
        <dbReference type="ChEBI" id="CHEBI:58210"/>
    </ligand>
</feature>
<sequence length="364" mass="38628">MSGNTFGKLFAVTNFGESHGPAIGCVIDGCPPGMTLSVTDIQPDLDRRRPGTSKFVTQRNEPDAVEILSGVYEGKTTGTPICLLIKNTDQRSKDYGNIVQTFRPGHADYTYYQKYGIRDPRGGGRSSARLTAPMVAAGAVAKKWLFEHYGTVFRGCMTQIGELPITFESWDFVPDNPFFAPIADVSALASYMEVLRKAGDSCGARIRVSASNVPVGLGEPLFDKLDADIAYAMMGINAVKGVEIGAGFASVAQHGSSHGDSLSPKGFKSNNAGGVLGGISSGQDLELSIAIKPTSSILTPRESIDMAGQSTEVITKGRHDPCVGIRATPIAEAMLALVVMDHALRQRAQCGDVTVNLKPIKASI</sequence>
<proteinExistence type="inferred from homology"/>
<dbReference type="EC" id="4.2.3.5" evidence="1"/>
<dbReference type="EMBL" id="CP000267">
    <property type="protein sequence ID" value="ABD70870.1"/>
    <property type="molecule type" value="Genomic_DNA"/>
</dbReference>
<dbReference type="RefSeq" id="WP_011465433.1">
    <property type="nucleotide sequence ID" value="NC_007908.1"/>
</dbReference>
<dbReference type="SMR" id="Q21TN3"/>
<dbReference type="STRING" id="338969.Rfer_3161"/>
<dbReference type="KEGG" id="rfr:Rfer_3161"/>
<dbReference type="eggNOG" id="COG0082">
    <property type="taxonomic scope" value="Bacteria"/>
</dbReference>
<dbReference type="HOGENOM" id="CLU_034547_0_2_4"/>
<dbReference type="OrthoDB" id="9771806at2"/>
<dbReference type="UniPathway" id="UPA00053">
    <property type="reaction ID" value="UER00090"/>
</dbReference>
<dbReference type="Proteomes" id="UP000008332">
    <property type="component" value="Chromosome"/>
</dbReference>
<dbReference type="GO" id="GO:0005829">
    <property type="term" value="C:cytosol"/>
    <property type="evidence" value="ECO:0007669"/>
    <property type="project" value="TreeGrafter"/>
</dbReference>
<dbReference type="GO" id="GO:0004107">
    <property type="term" value="F:chorismate synthase activity"/>
    <property type="evidence" value="ECO:0007669"/>
    <property type="project" value="UniProtKB-UniRule"/>
</dbReference>
<dbReference type="GO" id="GO:0010181">
    <property type="term" value="F:FMN binding"/>
    <property type="evidence" value="ECO:0007669"/>
    <property type="project" value="TreeGrafter"/>
</dbReference>
<dbReference type="GO" id="GO:0008652">
    <property type="term" value="P:amino acid biosynthetic process"/>
    <property type="evidence" value="ECO:0007669"/>
    <property type="project" value="UniProtKB-KW"/>
</dbReference>
<dbReference type="GO" id="GO:0009073">
    <property type="term" value="P:aromatic amino acid family biosynthetic process"/>
    <property type="evidence" value="ECO:0007669"/>
    <property type="project" value="UniProtKB-KW"/>
</dbReference>
<dbReference type="GO" id="GO:0009423">
    <property type="term" value="P:chorismate biosynthetic process"/>
    <property type="evidence" value="ECO:0007669"/>
    <property type="project" value="UniProtKB-UniRule"/>
</dbReference>
<dbReference type="CDD" id="cd07304">
    <property type="entry name" value="Chorismate_synthase"/>
    <property type="match status" value="1"/>
</dbReference>
<dbReference type="Gene3D" id="3.60.150.10">
    <property type="entry name" value="Chorismate synthase AroC"/>
    <property type="match status" value="1"/>
</dbReference>
<dbReference type="HAMAP" id="MF_00300">
    <property type="entry name" value="Chorismate_synth"/>
    <property type="match status" value="1"/>
</dbReference>
<dbReference type="InterPro" id="IPR000453">
    <property type="entry name" value="Chorismate_synth"/>
</dbReference>
<dbReference type="InterPro" id="IPR035904">
    <property type="entry name" value="Chorismate_synth_AroC_sf"/>
</dbReference>
<dbReference type="InterPro" id="IPR020541">
    <property type="entry name" value="Chorismate_synthase_CS"/>
</dbReference>
<dbReference type="NCBIfam" id="TIGR00033">
    <property type="entry name" value="aroC"/>
    <property type="match status" value="1"/>
</dbReference>
<dbReference type="NCBIfam" id="NF003793">
    <property type="entry name" value="PRK05382.1"/>
    <property type="match status" value="1"/>
</dbReference>
<dbReference type="PANTHER" id="PTHR21085">
    <property type="entry name" value="CHORISMATE SYNTHASE"/>
    <property type="match status" value="1"/>
</dbReference>
<dbReference type="PANTHER" id="PTHR21085:SF0">
    <property type="entry name" value="CHORISMATE SYNTHASE"/>
    <property type="match status" value="1"/>
</dbReference>
<dbReference type="Pfam" id="PF01264">
    <property type="entry name" value="Chorismate_synt"/>
    <property type="match status" value="1"/>
</dbReference>
<dbReference type="PIRSF" id="PIRSF001456">
    <property type="entry name" value="Chorismate_synth"/>
    <property type="match status" value="1"/>
</dbReference>
<dbReference type="SUPFAM" id="SSF103263">
    <property type="entry name" value="Chorismate synthase, AroC"/>
    <property type="match status" value="1"/>
</dbReference>
<dbReference type="PROSITE" id="PS00787">
    <property type="entry name" value="CHORISMATE_SYNTHASE_1"/>
    <property type="match status" value="1"/>
</dbReference>
<dbReference type="PROSITE" id="PS00788">
    <property type="entry name" value="CHORISMATE_SYNTHASE_2"/>
    <property type="match status" value="1"/>
</dbReference>
<dbReference type="PROSITE" id="PS00789">
    <property type="entry name" value="CHORISMATE_SYNTHASE_3"/>
    <property type="match status" value="1"/>
</dbReference>
<accession>Q21TN3</accession>